<proteinExistence type="evidence at transcript level"/>
<name>IAN5_ARATH</name>
<gene>
    <name evidence="3" type="primary">IAN5</name>
    <name evidence="6" type="ordered locus">At1g33910</name>
    <name evidence="7" type="ORF">T3M13.7</name>
</gene>
<reference key="1">
    <citation type="journal article" date="2000" name="Nature">
        <title>Sequence and analysis of chromosome 1 of the plant Arabidopsis thaliana.</title>
        <authorList>
            <person name="Theologis A."/>
            <person name="Ecker J.R."/>
            <person name="Palm C.J."/>
            <person name="Federspiel N.A."/>
            <person name="Kaul S."/>
            <person name="White O."/>
            <person name="Alonso J."/>
            <person name="Altafi H."/>
            <person name="Araujo R."/>
            <person name="Bowman C.L."/>
            <person name="Brooks S.Y."/>
            <person name="Buehler E."/>
            <person name="Chan A."/>
            <person name="Chao Q."/>
            <person name="Chen H."/>
            <person name="Cheuk R.F."/>
            <person name="Chin C.W."/>
            <person name="Chung M.K."/>
            <person name="Conn L."/>
            <person name="Conway A.B."/>
            <person name="Conway A.R."/>
            <person name="Creasy T.H."/>
            <person name="Dewar K."/>
            <person name="Dunn P."/>
            <person name="Etgu P."/>
            <person name="Feldblyum T.V."/>
            <person name="Feng J.-D."/>
            <person name="Fong B."/>
            <person name="Fujii C.Y."/>
            <person name="Gill J.E."/>
            <person name="Goldsmith A.D."/>
            <person name="Haas B."/>
            <person name="Hansen N.F."/>
            <person name="Hughes B."/>
            <person name="Huizar L."/>
            <person name="Hunter J.L."/>
            <person name="Jenkins J."/>
            <person name="Johnson-Hopson C."/>
            <person name="Khan S."/>
            <person name="Khaykin E."/>
            <person name="Kim C.J."/>
            <person name="Koo H.L."/>
            <person name="Kremenetskaia I."/>
            <person name="Kurtz D.B."/>
            <person name="Kwan A."/>
            <person name="Lam B."/>
            <person name="Langin-Hooper S."/>
            <person name="Lee A."/>
            <person name="Lee J.M."/>
            <person name="Lenz C.A."/>
            <person name="Li J.H."/>
            <person name="Li Y.-P."/>
            <person name="Lin X."/>
            <person name="Liu S.X."/>
            <person name="Liu Z.A."/>
            <person name="Luros J.S."/>
            <person name="Maiti R."/>
            <person name="Marziali A."/>
            <person name="Militscher J."/>
            <person name="Miranda M."/>
            <person name="Nguyen M."/>
            <person name="Nierman W.C."/>
            <person name="Osborne B.I."/>
            <person name="Pai G."/>
            <person name="Peterson J."/>
            <person name="Pham P.K."/>
            <person name="Rizzo M."/>
            <person name="Rooney T."/>
            <person name="Rowley D."/>
            <person name="Sakano H."/>
            <person name="Salzberg S.L."/>
            <person name="Schwartz J.R."/>
            <person name="Shinn P."/>
            <person name="Southwick A.M."/>
            <person name="Sun H."/>
            <person name="Tallon L.J."/>
            <person name="Tambunga G."/>
            <person name="Toriumi M.J."/>
            <person name="Town C.D."/>
            <person name="Utterback T."/>
            <person name="Van Aken S."/>
            <person name="Vaysberg M."/>
            <person name="Vysotskaia V.S."/>
            <person name="Walker M."/>
            <person name="Wu D."/>
            <person name="Yu G."/>
            <person name="Fraser C.M."/>
            <person name="Venter J.C."/>
            <person name="Davis R.W."/>
        </authorList>
    </citation>
    <scope>NUCLEOTIDE SEQUENCE [LARGE SCALE GENOMIC DNA]</scope>
    <source>
        <strain>cv. Columbia</strain>
    </source>
</reference>
<reference key="2">
    <citation type="journal article" date="2017" name="Plant J.">
        <title>Araport11: a complete reannotation of the Arabidopsis thaliana reference genome.</title>
        <authorList>
            <person name="Cheng C.Y."/>
            <person name="Krishnakumar V."/>
            <person name="Chan A.P."/>
            <person name="Thibaud-Nissen F."/>
            <person name="Schobel S."/>
            <person name="Town C.D."/>
        </authorList>
    </citation>
    <scope>GENOME REANNOTATION</scope>
    <source>
        <strain>cv. Columbia</strain>
    </source>
</reference>
<reference key="3">
    <citation type="submission" date="2005-05" db="EMBL/GenBank/DDBJ databases">
        <authorList>
            <person name="Underwood B.A."/>
            <person name="Xiao Y.-L."/>
            <person name="Moskal W.A. Jr."/>
            <person name="Monaghan E.L."/>
            <person name="Wang W."/>
            <person name="Redman J.C."/>
            <person name="Wu H.C."/>
            <person name="Utterback T."/>
            <person name="Town C.D."/>
        </authorList>
    </citation>
    <scope>NUCLEOTIDE SEQUENCE [LARGE SCALE MRNA]</scope>
    <source>
        <strain>cv. Columbia</strain>
    </source>
</reference>
<reference key="4">
    <citation type="journal article" date="2008" name="J. Plant Physiol.">
        <title>Computational identification and analysis of immune-associated nucleotide gene family in Arabidopsis thaliana.</title>
        <authorList>
            <person name="Liu C."/>
            <person name="Wang T."/>
            <person name="Zhang W."/>
            <person name="Li X."/>
        </authorList>
    </citation>
    <scope>GENE FAMILY</scope>
    <scope>NOMENCLATURE</scope>
</reference>
<accession>Q9C8U8</accession>
<evidence type="ECO:0000250" key="1">
    <source>
        <dbReference type="UniProtKB" id="Q8NHV1"/>
    </source>
</evidence>
<evidence type="ECO:0000255" key="2">
    <source>
        <dbReference type="PROSITE-ProRule" id="PRU01057"/>
    </source>
</evidence>
<evidence type="ECO:0000303" key="3">
    <source>
    </source>
</evidence>
<evidence type="ECO:0000305" key="4"/>
<evidence type="ECO:0000305" key="5">
    <source>
    </source>
</evidence>
<evidence type="ECO:0000312" key="6">
    <source>
        <dbReference type="Araport" id="AT1G33910"/>
    </source>
</evidence>
<evidence type="ECO:0000312" key="7">
    <source>
        <dbReference type="EMBL" id="AAG52206.1"/>
    </source>
</evidence>
<feature type="chain" id="PRO_0000438029" description="Immune-associated nucleotide-binding protein 5">
    <location>
        <begin position="1"/>
        <end position="301"/>
    </location>
</feature>
<feature type="domain" description="AIG1-type G" evidence="2">
    <location>
        <begin position="11"/>
        <end position="214"/>
    </location>
</feature>
<feature type="region of interest" description="G1" evidence="2">
    <location>
        <begin position="20"/>
        <end position="27"/>
    </location>
</feature>
<feature type="region of interest" description="G2" evidence="2">
    <location>
        <begin position="46"/>
        <end position="50"/>
    </location>
</feature>
<feature type="region of interest" description="G3" evidence="2">
    <location>
        <begin position="63"/>
        <end position="66"/>
    </location>
</feature>
<feature type="region of interest" description="G4" evidence="2">
    <location>
        <begin position="133"/>
        <end position="136"/>
    </location>
</feature>
<feature type="region of interest" description="G5" evidence="2">
    <location>
        <begin position="172"/>
        <end position="174"/>
    </location>
</feature>
<feature type="binding site" evidence="1">
    <location>
        <begin position="20"/>
        <end position="28"/>
    </location>
    <ligand>
        <name>GTP</name>
        <dbReference type="ChEBI" id="CHEBI:37565"/>
    </ligand>
</feature>
<feature type="binding site" evidence="1">
    <location>
        <position position="173"/>
    </location>
    <ligand>
        <name>GTP</name>
        <dbReference type="ChEBI" id="CHEBI:37565"/>
    </ligand>
</feature>
<keyword id="KW-0342">GTP-binding</keyword>
<keyword id="KW-0547">Nucleotide-binding</keyword>
<keyword id="KW-1185">Reference proteome</keyword>
<sequence length="301" mass="33679">MSDRAQPSASEPVRNIVLVGPTGNGKSSTGNSLIGKEVFILETVECKTCKAKTLDGQIINVIDTPGLFDLSVSTDYMNKEIINCLTLTDGGLHAVVLVLSVGTDILKEEEAALNKLQLLFGSKIVDYLVVLFTGGDVLEKENKTLDDYLSRGCPEFLKTVLRLCGGRRVLFNNKTTDEVKKIEQVKQLLAHVEAIENLNGGKALFTEENDLNEKRQGEMLMEQEMEVQSKKPENTEVEEMKKQLEISYGQQMNMMAQMVEDTLKESSASHERMLLALKDKVERSYLENEDMHNETKRCNIL</sequence>
<protein>
    <recommendedName>
        <fullName evidence="3">Immune-associated nucleotide-binding protein 5</fullName>
        <shortName evidence="3">AtIAN5</shortName>
    </recommendedName>
    <alternativeName>
        <fullName evidence="4">AIG1-like protein</fullName>
    </alternativeName>
</protein>
<organism>
    <name type="scientific">Arabidopsis thaliana</name>
    <name type="common">Mouse-ear cress</name>
    <dbReference type="NCBI Taxonomy" id="3702"/>
    <lineage>
        <taxon>Eukaryota</taxon>
        <taxon>Viridiplantae</taxon>
        <taxon>Streptophyta</taxon>
        <taxon>Embryophyta</taxon>
        <taxon>Tracheophyta</taxon>
        <taxon>Spermatophyta</taxon>
        <taxon>Magnoliopsida</taxon>
        <taxon>eudicotyledons</taxon>
        <taxon>Gunneridae</taxon>
        <taxon>Pentapetalae</taxon>
        <taxon>rosids</taxon>
        <taxon>malvids</taxon>
        <taxon>Brassicales</taxon>
        <taxon>Brassicaceae</taxon>
        <taxon>Camelineae</taxon>
        <taxon>Arabidopsis</taxon>
    </lineage>
</organism>
<comment type="tissue specificity">
    <text evidence="5">Expressed in pollen, cotyledons and lateral roots.</text>
</comment>
<comment type="induction">
    <text evidence="5">Up-regulated by brassinolide and heat treatment. Down-regulated by 2-aminoethoxyvinylglycine (AVG), high CO(2), isoxaben, and propiconazole treatments.</text>
</comment>
<comment type="similarity">
    <text evidence="4">Belongs to the TRAFAC class TrmE-Era-EngA-EngB-Septin-like GTPase superfamily. AIG1/Toc34/Toc159-like paraseptin GTPase family. IAN subfamily.</text>
</comment>
<dbReference type="EMBL" id="AC022288">
    <property type="protein sequence ID" value="AAG52206.1"/>
    <property type="molecule type" value="Genomic_DNA"/>
</dbReference>
<dbReference type="EMBL" id="CP002684">
    <property type="protein sequence ID" value="AEE31639.1"/>
    <property type="molecule type" value="Genomic_DNA"/>
</dbReference>
<dbReference type="EMBL" id="DQ056477">
    <property type="protein sequence ID" value="AAY78634.1"/>
    <property type="molecule type" value="mRNA"/>
</dbReference>
<dbReference type="PIR" id="H86462">
    <property type="entry name" value="H86462"/>
</dbReference>
<dbReference type="RefSeq" id="NP_174653.1">
    <property type="nucleotide sequence ID" value="NM_103113.1"/>
</dbReference>
<dbReference type="SMR" id="Q9C8U8"/>
<dbReference type="FunCoup" id="Q9C8U8">
    <property type="interactions" value="48"/>
</dbReference>
<dbReference type="STRING" id="3702.Q9C8U8"/>
<dbReference type="PaxDb" id="3702-AT1G33910.1"/>
<dbReference type="EnsemblPlants" id="AT1G33910.1">
    <property type="protein sequence ID" value="AT1G33910.1"/>
    <property type="gene ID" value="AT1G33910"/>
</dbReference>
<dbReference type="GeneID" id="840288"/>
<dbReference type="Gramene" id="AT1G33910.1">
    <property type="protein sequence ID" value="AT1G33910.1"/>
    <property type="gene ID" value="AT1G33910"/>
</dbReference>
<dbReference type="KEGG" id="ath:AT1G33910"/>
<dbReference type="Araport" id="AT1G33910"/>
<dbReference type="TAIR" id="AT1G33910">
    <property type="gene designation" value="IAN5"/>
</dbReference>
<dbReference type="eggNOG" id="ENOG502R7PE">
    <property type="taxonomic scope" value="Eukaryota"/>
</dbReference>
<dbReference type="HOGENOM" id="CLU_010468_0_1_1"/>
<dbReference type="InParanoid" id="Q9C8U8"/>
<dbReference type="OMA" id="YLMEAPE"/>
<dbReference type="PhylomeDB" id="Q9C8U8"/>
<dbReference type="PRO" id="PR:Q9C8U8"/>
<dbReference type="Proteomes" id="UP000006548">
    <property type="component" value="Chromosome 1"/>
</dbReference>
<dbReference type="ExpressionAtlas" id="Q9C8U8">
    <property type="expression patterns" value="differential"/>
</dbReference>
<dbReference type="GO" id="GO:0005783">
    <property type="term" value="C:endoplasmic reticulum"/>
    <property type="evidence" value="ECO:0000314"/>
    <property type="project" value="TAIR"/>
</dbReference>
<dbReference type="GO" id="GO:0005886">
    <property type="term" value="C:plasma membrane"/>
    <property type="evidence" value="ECO:0000314"/>
    <property type="project" value="TAIR"/>
</dbReference>
<dbReference type="GO" id="GO:0005525">
    <property type="term" value="F:GTP binding"/>
    <property type="evidence" value="ECO:0007669"/>
    <property type="project" value="UniProtKB-KW"/>
</dbReference>
<dbReference type="GO" id="GO:0034605">
    <property type="term" value="P:cellular response to heat"/>
    <property type="evidence" value="ECO:0000316"/>
    <property type="project" value="TAIR"/>
</dbReference>
<dbReference type="GO" id="GO:0030968">
    <property type="term" value="P:endoplasmic reticulum unfolded protein response"/>
    <property type="evidence" value="ECO:0000316"/>
    <property type="project" value="TAIR"/>
</dbReference>
<dbReference type="CDD" id="cd01852">
    <property type="entry name" value="AIG1"/>
    <property type="match status" value="1"/>
</dbReference>
<dbReference type="FunFam" id="3.40.50.300:FF:000840">
    <property type="entry name" value="Immune-associated nucleotide-binding protein 9"/>
    <property type="match status" value="1"/>
</dbReference>
<dbReference type="Gene3D" id="3.40.50.300">
    <property type="entry name" value="P-loop containing nucleotide triphosphate hydrolases"/>
    <property type="match status" value="1"/>
</dbReference>
<dbReference type="InterPro" id="IPR006703">
    <property type="entry name" value="G_AIG1"/>
</dbReference>
<dbReference type="InterPro" id="IPR045058">
    <property type="entry name" value="GIMA/IAN/Toc"/>
</dbReference>
<dbReference type="InterPro" id="IPR027417">
    <property type="entry name" value="P-loop_NTPase"/>
</dbReference>
<dbReference type="PANTHER" id="PTHR10903:SF146">
    <property type="entry name" value="AIG1-LIKE PROTEIN_ 48352-49494-RELATED"/>
    <property type="match status" value="1"/>
</dbReference>
<dbReference type="PANTHER" id="PTHR10903">
    <property type="entry name" value="GTPASE, IMAP FAMILY MEMBER-RELATED"/>
    <property type="match status" value="1"/>
</dbReference>
<dbReference type="Pfam" id="PF04548">
    <property type="entry name" value="AIG1"/>
    <property type="match status" value="1"/>
</dbReference>
<dbReference type="SUPFAM" id="SSF52540">
    <property type="entry name" value="P-loop containing nucleoside triphosphate hydrolases"/>
    <property type="match status" value="1"/>
</dbReference>
<dbReference type="PROSITE" id="PS51720">
    <property type="entry name" value="G_AIG1"/>
    <property type="match status" value="1"/>
</dbReference>